<keyword id="KW-0548">Nucleotidyltransferase</keyword>
<keyword id="KW-0694">RNA-binding</keyword>
<keyword id="KW-0698">rRNA processing</keyword>
<keyword id="KW-0808">Transferase</keyword>
<keyword id="KW-0819">tRNA processing</keyword>
<keyword id="KW-0820">tRNA-binding</keyword>
<evidence type="ECO:0000255" key="1">
    <source>
        <dbReference type="HAMAP-Rule" id="MF_00564"/>
    </source>
</evidence>
<gene>
    <name evidence="1" type="primary">rph</name>
    <name type="ordered locus">RC0975</name>
</gene>
<proteinExistence type="inferred from homology"/>
<organism>
    <name type="scientific">Rickettsia conorii (strain ATCC VR-613 / Malish 7)</name>
    <dbReference type="NCBI Taxonomy" id="272944"/>
    <lineage>
        <taxon>Bacteria</taxon>
        <taxon>Pseudomonadati</taxon>
        <taxon>Pseudomonadota</taxon>
        <taxon>Alphaproteobacteria</taxon>
        <taxon>Rickettsiales</taxon>
        <taxon>Rickettsiaceae</taxon>
        <taxon>Rickettsieae</taxon>
        <taxon>Rickettsia</taxon>
        <taxon>spotted fever group</taxon>
    </lineage>
</organism>
<feature type="chain" id="PRO_0000139932" description="Ribonuclease PH">
    <location>
        <begin position="1"/>
        <end position="239"/>
    </location>
</feature>
<feature type="binding site" evidence="1">
    <location>
        <position position="86"/>
    </location>
    <ligand>
        <name>phosphate</name>
        <dbReference type="ChEBI" id="CHEBI:43474"/>
        <note>substrate</note>
    </ligand>
</feature>
<feature type="binding site" evidence="1">
    <location>
        <begin position="124"/>
        <end position="126"/>
    </location>
    <ligand>
        <name>phosphate</name>
        <dbReference type="ChEBI" id="CHEBI:43474"/>
        <note>substrate</note>
    </ligand>
</feature>
<accession>Q92GZ7</accession>
<comment type="function">
    <text evidence="1">Phosphorolytic 3'-5' exoribonuclease that plays an important role in tRNA 3'-end maturation. Removes nucleotide residues following the 3'-CCA terminus of tRNAs; can also add nucleotides to the ends of RNA molecules by using nucleoside diphosphates as substrates, but this may not be physiologically important. Probably plays a role in initiation of 16S rRNA degradation (leading to ribosome degradation) during starvation.</text>
</comment>
<comment type="catalytic activity">
    <reaction evidence="1">
        <text>tRNA(n+1) + phosphate = tRNA(n) + a ribonucleoside 5'-diphosphate</text>
        <dbReference type="Rhea" id="RHEA:10628"/>
        <dbReference type="Rhea" id="RHEA-COMP:17343"/>
        <dbReference type="Rhea" id="RHEA-COMP:17344"/>
        <dbReference type="ChEBI" id="CHEBI:43474"/>
        <dbReference type="ChEBI" id="CHEBI:57930"/>
        <dbReference type="ChEBI" id="CHEBI:173114"/>
        <dbReference type="EC" id="2.7.7.56"/>
    </reaction>
</comment>
<comment type="subunit">
    <text evidence="1">Homohexameric ring arranged as a trimer of dimers.</text>
</comment>
<comment type="similarity">
    <text evidence="1">Belongs to the RNase PH family.</text>
</comment>
<name>RNPH_RICCN</name>
<protein>
    <recommendedName>
        <fullName evidence="1">Ribonuclease PH</fullName>
        <shortName evidence="1">RNase PH</shortName>
        <ecNumber evidence="1">2.7.7.56</ecNumber>
    </recommendedName>
    <alternativeName>
        <fullName evidence="1">tRNA nucleotidyltransferase</fullName>
    </alternativeName>
</protein>
<dbReference type="EC" id="2.7.7.56" evidence="1"/>
<dbReference type="EMBL" id="AE006914">
    <property type="protein sequence ID" value="AAL03513.1"/>
    <property type="molecule type" value="Genomic_DNA"/>
</dbReference>
<dbReference type="PIR" id="G97821">
    <property type="entry name" value="G97821"/>
</dbReference>
<dbReference type="RefSeq" id="WP_010977568.1">
    <property type="nucleotide sequence ID" value="NC_003103.1"/>
</dbReference>
<dbReference type="SMR" id="Q92GZ7"/>
<dbReference type="GeneID" id="928118"/>
<dbReference type="KEGG" id="rco:RC0975"/>
<dbReference type="HOGENOM" id="CLU_050858_0_0_5"/>
<dbReference type="Proteomes" id="UP000000816">
    <property type="component" value="Chromosome"/>
</dbReference>
<dbReference type="GO" id="GO:0000175">
    <property type="term" value="F:3'-5'-RNA exonuclease activity"/>
    <property type="evidence" value="ECO:0007669"/>
    <property type="project" value="UniProtKB-UniRule"/>
</dbReference>
<dbReference type="GO" id="GO:0000049">
    <property type="term" value="F:tRNA binding"/>
    <property type="evidence" value="ECO:0007669"/>
    <property type="project" value="UniProtKB-UniRule"/>
</dbReference>
<dbReference type="GO" id="GO:0009022">
    <property type="term" value="F:tRNA nucleotidyltransferase activity"/>
    <property type="evidence" value="ECO:0007669"/>
    <property type="project" value="UniProtKB-UniRule"/>
</dbReference>
<dbReference type="GO" id="GO:0016075">
    <property type="term" value="P:rRNA catabolic process"/>
    <property type="evidence" value="ECO:0007669"/>
    <property type="project" value="UniProtKB-UniRule"/>
</dbReference>
<dbReference type="GO" id="GO:0006364">
    <property type="term" value="P:rRNA processing"/>
    <property type="evidence" value="ECO:0007669"/>
    <property type="project" value="UniProtKB-KW"/>
</dbReference>
<dbReference type="GO" id="GO:0008033">
    <property type="term" value="P:tRNA processing"/>
    <property type="evidence" value="ECO:0007669"/>
    <property type="project" value="UniProtKB-UniRule"/>
</dbReference>
<dbReference type="CDD" id="cd11362">
    <property type="entry name" value="RNase_PH_bact"/>
    <property type="match status" value="1"/>
</dbReference>
<dbReference type="FunFam" id="3.30.230.70:FF:000003">
    <property type="entry name" value="Ribonuclease PH"/>
    <property type="match status" value="1"/>
</dbReference>
<dbReference type="Gene3D" id="3.30.230.70">
    <property type="entry name" value="GHMP Kinase, N-terminal domain"/>
    <property type="match status" value="1"/>
</dbReference>
<dbReference type="HAMAP" id="MF_00564">
    <property type="entry name" value="RNase_PH"/>
    <property type="match status" value="1"/>
</dbReference>
<dbReference type="InterPro" id="IPR001247">
    <property type="entry name" value="ExoRNase_PH_dom1"/>
</dbReference>
<dbReference type="InterPro" id="IPR015847">
    <property type="entry name" value="ExoRNase_PH_dom2"/>
</dbReference>
<dbReference type="InterPro" id="IPR036345">
    <property type="entry name" value="ExoRNase_PH_dom2_sf"/>
</dbReference>
<dbReference type="InterPro" id="IPR027408">
    <property type="entry name" value="PNPase/RNase_PH_dom_sf"/>
</dbReference>
<dbReference type="InterPro" id="IPR020568">
    <property type="entry name" value="Ribosomal_Su5_D2-typ_SF"/>
</dbReference>
<dbReference type="InterPro" id="IPR050080">
    <property type="entry name" value="RNase_PH"/>
</dbReference>
<dbReference type="InterPro" id="IPR002381">
    <property type="entry name" value="RNase_PH_bac-type"/>
</dbReference>
<dbReference type="InterPro" id="IPR018336">
    <property type="entry name" value="RNase_PH_CS"/>
</dbReference>
<dbReference type="NCBIfam" id="TIGR01966">
    <property type="entry name" value="RNasePH"/>
    <property type="match status" value="1"/>
</dbReference>
<dbReference type="PANTHER" id="PTHR11953">
    <property type="entry name" value="EXOSOME COMPLEX COMPONENT"/>
    <property type="match status" value="1"/>
</dbReference>
<dbReference type="PANTHER" id="PTHR11953:SF0">
    <property type="entry name" value="EXOSOME COMPLEX COMPONENT RRP41"/>
    <property type="match status" value="1"/>
</dbReference>
<dbReference type="Pfam" id="PF01138">
    <property type="entry name" value="RNase_PH"/>
    <property type="match status" value="1"/>
</dbReference>
<dbReference type="Pfam" id="PF03725">
    <property type="entry name" value="RNase_PH_C"/>
    <property type="match status" value="1"/>
</dbReference>
<dbReference type="SUPFAM" id="SSF55666">
    <property type="entry name" value="Ribonuclease PH domain 2-like"/>
    <property type="match status" value="1"/>
</dbReference>
<dbReference type="SUPFAM" id="SSF54211">
    <property type="entry name" value="Ribosomal protein S5 domain 2-like"/>
    <property type="match status" value="1"/>
</dbReference>
<dbReference type="PROSITE" id="PS01277">
    <property type="entry name" value="RIBONUCLEASE_PH"/>
    <property type="match status" value="1"/>
</dbReference>
<reference key="1">
    <citation type="journal article" date="2001" name="Science">
        <title>Mechanisms of evolution in Rickettsia conorii and R. prowazekii.</title>
        <authorList>
            <person name="Ogata H."/>
            <person name="Audic S."/>
            <person name="Renesto-Audiffren P."/>
            <person name="Fournier P.-E."/>
            <person name="Barbe V."/>
            <person name="Samson D."/>
            <person name="Roux V."/>
            <person name="Cossart P."/>
            <person name="Weissenbach J."/>
            <person name="Claverie J.-M."/>
            <person name="Raoult D."/>
        </authorList>
    </citation>
    <scope>NUCLEOTIDE SEQUENCE [LARGE SCALE GENOMIC DNA]</scope>
    <source>
        <strain>ATCC VR-613 / Malish 7</strain>
    </source>
</reference>
<sequence>MRQSGRKSNQLRPISLELSPLINAEGSCLIKIGNTHVMCSATCETTVPPFLRGQNQGWITAEYGMLPGSTSQRIKREAALGKQGGRTQEIQRLIGRAMRCVIDVRKLGERQIIIDCDVINADGGTRTAAITGSYVALHLAIRSLMKKRVLKVNPLISQIAAISCGIYKGEAILDLDYLEDSDADVDSNFVFAGNGNLIEVQGTAEKNPFSEEQFLAMLKLAKGGAAELFKLQNQVLLGS</sequence>